<sequence length="877" mass="96556">MADVKISEIAQELGYTSKEIIEKANEMGLEDIKSPNKKVSSEIAEAIYQYVQSGEILDVVKKIAKPKKESTAKKTTKKDEVKKEEKKTTTKKESKNPAKAVSEKKDEVKKEEKQPENPIKNEILEEKKEEIKLDEKLGSNLNLAKRRGLVIVKKKKEESNETQINNEEKISTQATQGLSLSMIFSNSDESLKRKKKEKKNHPVASKKENTTKMDLLGDKDFADISLEDDDMVVLPDFSIKENKPAQPTNKKQPNILKQSLNNSINPFGEGGIQRRSRKKPPKKVEKKESEAITSVSIPKEIRVYEFAEKLGKNTGEIISKLFMLGMMTTKNDFLDEDAIEILAAEFGVEINIIDEADEFDYVKDYDENQTEENLSQRAPVITIMGHVDHGKTSLLDYIRKSRIASGEAGGITQHVGAYMVEKNGRKITFIDTPGHEAFTAMRARGASITDIVIIVVAADDGVKPQTKEAINHAKAANVPIIIAINKMDKENANPDMVKTQLAEMEIMPVEWGGSHEFVPVSAKKGDGVEDLLEIVLLQADILELKANPKAHAKASIIESSVQKGRGPVATIIVQNGTLRVGNTVVAGEAYGKVRAMSDDQGKALKEIGPGECGVIIGLSEVADAGETLIAVDSDKQAREYANKRHEYNRQKELSKSTKVSIDELGAKIKEGNLKALPVILKADVQGSLEAIKASLEKLKNDEIKVNIIHSGVGGITQSDIELASASENSIVLGFNIRPTGEIKERAKDKGVEIKTYNVIYNLLDDVKALLGGMMSPIISEEQLGQAEIRQVINVPKLGQIAGCMVTEGTINRGAKIRLIRDGVVVFEGNVSSLKRFKDDVREVAKGYECGVGIEGCNDMRVGDYIESYKEVEEQVSL</sequence>
<feature type="chain" id="PRO_1000118754" description="Translation initiation factor IF-2">
    <location>
        <begin position="1"/>
        <end position="877"/>
    </location>
</feature>
<feature type="domain" description="tr-type G">
    <location>
        <begin position="376"/>
        <end position="543"/>
    </location>
</feature>
<feature type="region of interest" description="Disordered" evidence="3">
    <location>
        <begin position="66"/>
        <end position="127"/>
    </location>
</feature>
<feature type="region of interest" description="Disordered" evidence="3">
    <location>
        <begin position="187"/>
        <end position="208"/>
    </location>
</feature>
<feature type="region of interest" description="Disordered" evidence="3">
    <location>
        <begin position="241"/>
        <end position="290"/>
    </location>
</feature>
<feature type="region of interest" description="G1" evidence="1">
    <location>
        <begin position="385"/>
        <end position="392"/>
    </location>
</feature>
<feature type="region of interest" description="G2" evidence="1">
    <location>
        <begin position="410"/>
        <end position="414"/>
    </location>
</feature>
<feature type="region of interest" description="G3" evidence="1">
    <location>
        <begin position="431"/>
        <end position="434"/>
    </location>
</feature>
<feature type="region of interest" description="G4" evidence="1">
    <location>
        <begin position="485"/>
        <end position="488"/>
    </location>
</feature>
<feature type="region of interest" description="G5" evidence="1">
    <location>
        <begin position="521"/>
        <end position="523"/>
    </location>
</feature>
<feature type="compositionally biased region" description="Basic and acidic residues" evidence="3">
    <location>
        <begin position="66"/>
        <end position="115"/>
    </location>
</feature>
<feature type="compositionally biased region" description="Basic residues" evidence="3">
    <location>
        <begin position="192"/>
        <end position="201"/>
    </location>
</feature>
<feature type="compositionally biased region" description="Polar residues" evidence="3">
    <location>
        <begin position="245"/>
        <end position="265"/>
    </location>
</feature>
<feature type="binding site" evidence="2">
    <location>
        <begin position="385"/>
        <end position="392"/>
    </location>
    <ligand>
        <name>GTP</name>
        <dbReference type="ChEBI" id="CHEBI:37565"/>
    </ligand>
</feature>
<feature type="binding site" evidence="2">
    <location>
        <begin position="431"/>
        <end position="435"/>
    </location>
    <ligand>
        <name>GTP</name>
        <dbReference type="ChEBI" id="CHEBI:37565"/>
    </ligand>
</feature>
<feature type="binding site" evidence="2">
    <location>
        <begin position="485"/>
        <end position="488"/>
    </location>
    <ligand>
        <name>GTP</name>
        <dbReference type="ChEBI" id="CHEBI:37565"/>
    </ligand>
</feature>
<proteinExistence type="inferred from homology"/>
<comment type="function">
    <text evidence="2">One of the essential components for the initiation of protein synthesis. Protects formylmethionyl-tRNA from spontaneous hydrolysis and promotes its binding to the 30S ribosomal subunits. Also involved in the hydrolysis of GTP during the formation of the 70S ribosomal complex.</text>
</comment>
<comment type="subcellular location">
    <subcellularLocation>
        <location evidence="2">Cytoplasm</location>
    </subcellularLocation>
</comment>
<comment type="similarity">
    <text evidence="2">Belongs to the TRAFAC class translation factor GTPase superfamily. Classic translation factor GTPase family. IF-2 subfamily.</text>
</comment>
<keyword id="KW-0963">Cytoplasm</keyword>
<keyword id="KW-0342">GTP-binding</keyword>
<keyword id="KW-0396">Initiation factor</keyword>
<keyword id="KW-0547">Nucleotide-binding</keyword>
<keyword id="KW-0648">Protein biosynthesis</keyword>
<keyword id="KW-1185">Reference proteome</keyword>
<gene>
    <name evidence="2" type="primary">infB</name>
    <name type="ordered locus">Cla_0222</name>
</gene>
<dbReference type="EMBL" id="CP000932">
    <property type="protein sequence ID" value="ACM63585.1"/>
    <property type="molecule type" value="Genomic_DNA"/>
</dbReference>
<dbReference type="RefSeq" id="WP_012660969.1">
    <property type="nucleotide sequence ID" value="NC_012039.1"/>
</dbReference>
<dbReference type="SMR" id="B9KEV0"/>
<dbReference type="STRING" id="306263.Cla_0222"/>
<dbReference type="KEGG" id="cla:CLA_0222"/>
<dbReference type="PATRIC" id="fig|306263.5.peg.221"/>
<dbReference type="eggNOG" id="COG0532">
    <property type="taxonomic scope" value="Bacteria"/>
</dbReference>
<dbReference type="HOGENOM" id="CLU_006301_4_1_7"/>
<dbReference type="Proteomes" id="UP000007727">
    <property type="component" value="Chromosome"/>
</dbReference>
<dbReference type="GO" id="GO:0005829">
    <property type="term" value="C:cytosol"/>
    <property type="evidence" value="ECO:0007669"/>
    <property type="project" value="TreeGrafter"/>
</dbReference>
<dbReference type="GO" id="GO:0005525">
    <property type="term" value="F:GTP binding"/>
    <property type="evidence" value="ECO:0007669"/>
    <property type="project" value="UniProtKB-KW"/>
</dbReference>
<dbReference type="GO" id="GO:0003924">
    <property type="term" value="F:GTPase activity"/>
    <property type="evidence" value="ECO:0007669"/>
    <property type="project" value="UniProtKB-UniRule"/>
</dbReference>
<dbReference type="GO" id="GO:0003743">
    <property type="term" value="F:translation initiation factor activity"/>
    <property type="evidence" value="ECO:0007669"/>
    <property type="project" value="UniProtKB-UniRule"/>
</dbReference>
<dbReference type="CDD" id="cd01887">
    <property type="entry name" value="IF2_eIF5B"/>
    <property type="match status" value="1"/>
</dbReference>
<dbReference type="CDD" id="cd03702">
    <property type="entry name" value="IF2_mtIF2_II"/>
    <property type="match status" value="1"/>
</dbReference>
<dbReference type="CDD" id="cd03692">
    <property type="entry name" value="mtIF2_IVc"/>
    <property type="match status" value="1"/>
</dbReference>
<dbReference type="FunFam" id="2.40.30.10:FF:000008">
    <property type="entry name" value="Translation initiation factor IF-2"/>
    <property type="match status" value="1"/>
</dbReference>
<dbReference type="FunFam" id="2.40.30.10:FF:000054">
    <property type="entry name" value="Translation initiation factor IF-2"/>
    <property type="match status" value="1"/>
</dbReference>
<dbReference type="FunFam" id="3.40.50.10050:FF:000001">
    <property type="entry name" value="Translation initiation factor IF-2"/>
    <property type="match status" value="1"/>
</dbReference>
<dbReference type="FunFam" id="3.40.50.300:FF:000019">
    <property type="entry name" value="Translation initiation factor IF-2"/>
    <property type="match status" value="1"/>
</dbReference>
<dbReference type="Gene3D" id="1.10.10.2480">
    <property type="match status" value="1"/>
</dbReference>
<dbReference type="Gene3D" id="3.40.50.300">
    <property type="entry name" value="P-loop containing nucleotide triphosphate hydrolases"/>
    <property type="match status" value="1"/>
</dbReference>
<dbReference type="Gene3D" id="2.40.30.10">
    <property type="entry name" value="Translation factors"/>
    <property type="match status" value="2"/>
</dbReference>
<dbReference type="Gene3D" id="3.40.50.10050">
    <property type="entry name" value="Translation initiation factor IF- 2, domain 3"/>
    <property type="match status" value="1"/>
</dbReference>
<dbReference type="HAMAP" id="MF_00100_B">
    <property type="entry name" value="IF_2_B"/>
    <property type="match status" value="1"/>
</dbReference>
<dbReference type="InterPro" id="IPR053905">
    <property type="entry name" value="EF-G-like_DII"/>
</dbReference>
<dbReference type="InterPro" id="IPR004161">
    <property type="entry name" value="EFTu-like_2"/>
</dbReference>
<dbReference type="InterPro" id="IPR044145">
    <property type="entry name" value="IF2_II"/>
</dbReference>
<dbReference type="InterPro" id="IPR006847">
    <property type="entry name" value="IF2_N"/>
</dbReference>
<dbReference type="InterPro" id="IPR027417">
    <property type="entry name" value="P-loop_NTPase"/>
</dbReference>
<dbReference type="InterPro" id="IPR005225">
    <property type="entry name" value="Small_GTP-bd"/>
</dbReference>
<dbReference type="InterPro" id="IPR000795">
    <property type="entry name" value="T_Tr_GTP-bd_dom"/>
</dbReference>
<dbReference type="InterPro" id="IPR000178">
    <property type="entry name" value="TF_IF2_bacterial-like"/>
</dbReference>
<dbReference type="InterPro" id="IPR015760">
    <property type="entry name" value="TIF_IF2"/>
</dbReference>
<dbReference type="InterPro" id="IPR023115">
    <property type="entry name" value="TIF_IF2_dom3"/>
</dbReference>
<dbReference type="InterPro" id="IPR036925">
    <property type="entry name" value="TIF_IF2_dom3_sf"/>
</dbReference>
<dbReference type="InterPro" id="IPR009000">
    <property type="entry name" value="Transl_B-barrel_sf"/>
</dbReference>
<dbReference type="NCBIfam" id="TIGR00487">
    <property type="entry name" value="IF-2"/>
    <property type="match status" value="1"/>
</dbReference>
<dbReference type="NCBIfam" id="TIGR00231">
    <property type="entry name" value="small_GTP"/>
    <property type="match status" value="1"/>
</dbReference>
<dbReference type="PANTHER" id="PTHR43381:SF5">
    <property type="entry name" value="TR-TYPE G DOMAIN-CONTAINING PROTEIN"/>
    <property type="match status" value="1"/>
</dbReference>
<dbReference type="PANTHER" id="PTHR43381">
    <property type="entry name" value="TRANSLATION INITIATION FACTOR IF-2-RELATED"/>
    <property type="match status" value="1"/>
</dbReference>
<dbReference type="Pfam" id="PF22042">
    <property type="entry name" value="EF-G_D2"/>
    <property type="match status" value="1"/>
</dbReference>
<dbReference type="Pfam" id="PF00009">
    <property type="entry name" value="GTP_EFTU"/>
    <property type="match status" value="1"/>
</dbReference>
<dbReference type="Pfam" id="PF03144">
    <property type="entry name" value="GTP_EFTU_D2"/>
    <property type="match status" value="1"/>
</dbReference>
<dbReference type="Pfam" id="PF11987">
    <property type="entry name" value="IF-2"/>
    <property type="match status" value="1"/>
</dbReference>
<dbReference type="Pfam" id="PF04760">
    <property type="entry name" value="IF2_N"/>
    <property type="match status" value="2"/>
</dbReference>
<dbReference type="SUPFAM" id="SSF52156">
    <property type="entry name" value="Initiation factor IF2/eIF5b, domain 3"/>
    <property type="match status" value="1"/>
</dbReference>
<dbReference type="SUPFAM" id="SSF52540">
    <property type="entry name" value="P-loop containing nucleoside triphosphate hydrolases"/>
    <property type="match status" value="1"/>
</dbReference>
<dbReference type="SUPFAM" id="SSF50447">
    <property type="entry name" value="Translation proteins"/>
    <property type="match status" value="2"/>
</dbReference>
<dbReference type="PROSITE" id="PS51722">
    <property type="entry name" value="G_TR_2"/>
    <property type="match status" value="1"/>
</dbReference>
<dbReference type="PROSITE" id="PS01176">
    <property type="entry name" value="IF2"/>
    <property type="match status" value="1"/>
</dbReference>
<reference key="1">
    <citation type="journal article" date="2008" name="Foodborne Pathog. Dis.">
        <title>The complete genome sequence and analysis of the human pathogen Campylobacter lari.</title>
        <authorList>
            <person name="Miller W.G."/>
            <person name="Wang G."/>
            <person name="Binnewies T.T."/>
            <person name="Parker C.T."/>
        </authorList>
    </citation>
    <scope>NUCLEOTIDE SEQUENCE [LARGE SCALE GENOMIC DNA]</scope>
    <source>
        <strain>RM2100 / D67 / ATCC BAA-1060</strain>
    </source>
</reference>
<name>IF2_CAMLR</name>
<protein>
    <recommendedName>
        <fullName evidence="2">Translation initiation factor IF-2</fullName>
    </recommendedName>
</protein>
<evidence type="ECO:0000250" key="1"/>
<evidence type="ECO:0000255" key="2">
    <source>
        <dbReference type="HAMAP-Rule" id="MF_00100"/>
    </source>
</evidence>
<evidence type="ECO:0000256" key="3">
    <source>
        <dbReference type="SAM" id="MobiDB-lite"/>
    </source>
</evidence>
<accession>B9KEV0</accession>
<organism>
    <name type="scientific">Campylobacter lari (strain RM2100 / D67 / ATCC BAA-1060)</name>
    <dbReference type="NCBI Taxonomy" id="306263"/>
    <lineage>
        <taxon>Bacteria</taxon>
        <taxon>Pseudomonadati</taxon>
        <taxon>Campylobacterota</taxon>
        <taxon>Epsilonproteobacteria</taxon>
        <taxon>Campylobacterales</taxon>
        <taxon>Campylobacteraceae</taxon>
        <taxon>Campylobacter</taxon>
    </lineage>
</organism>